<sequence>MRSKSSEGDLQPEDTQSREDKETTATYSEDTKPETQKERNAALDNLAKTPIQLVVQPTPLTPAITPCEAPPPPPPPKPSSDNNNSKRLKVKDQLIEVPSDEVGRVENNIDNFPFYHGFMGRNECEAMLSNHGDFLIRMTEIGKRVAYVISIKWKYQNIHVLVKRTKTKKLYWTKKYAFKSICELIAYHKRNHKPIYEGMTLICGLARHGWQLNNEQVTLNKKLGEGQFGEVHKGSLKTSVFAAPVTVAVKTLHQNHLSANEKILFLREANVMLTLSHPNVIKFYGVCTMKEPIMIVMEFCDGKSLEDALLSKEEKVSAEDKILYLFHAACGIDYLHGKQVIHRDIAARNCLLNSKKILKISDFGLSVKGVAIKERKGGCLPVKYMAPETLKKGLYSTASDIYSYGALMYEVYTDGKTPFETCGLRGNELRKAIIGKRISLAVEVELPVFIANIFEQSRQYETEDRISSKQIIQIFKEEVGFHEIETSGILHKLVNSLPRIHNKERKPAAVAV</sequence>
<comment type="function">
    <text evidence="4 5">Probable non-receptor tyrosine-protein kinase which plays a role in spermatid activation (spermiogenesis) in hermaphrodites.</text>
</comment>
<comment type="catalytic activity">
    <reaction>
        <text>L-tyrosyl-[protein] + ATP = O-phospho-L-tyrosyl-[protein] + ADP + H(+)</text>
        <dbReference type="Rhea" id="RHEA:10596"/>
        <dbReference type="Rhea" id="RHEA-COMP:10136"/>
        <dbReference type="Rhea" id="RHEA-COMP:20101"/>
        <dbReference type="ChEBI" id="CHEBI:15378"/>
        <dbReference type="ChEBI" id="CHEBI:30616"/>
        <dbReference type="ChEBI" id="CHEBI:46858"/>
        <dbReference type="ChEBI" id="CHEBI:61978"/>
        <dbReference type="ChEBI" id="CHEBI:456216"/>
        <dbReference type="EC" id="2.7.10.2"/>
    </reaction>
</comment>
<comment type="subcellular location">
    <subcellularLocation>
        <location evidence="4">Cell membrane</location>
        <topology evidence="4">Peripheral membrane protein</topology>
    </subcellularLocation>
    <subcellularLocation>
        <location evidence="4">Cytoplasm</location>
    </subcellularLocation>
    <text evidence="4">Localizes mainly in the cytoplasm of stage I spermatocytes and at the cell membrane of stage II spermatocytes and spermatids.</text>
</comment>
<comment type="tissue specificity">
    <text evidence="4">Expression is restricted to male germline.</text>
</comment>
<comment type="similarity">
    <text evidence="6">Belongs to the protein kinase superfamily. Tyr protein kinase family. Fes/fps subfamily.</text>
</comment>
<evidence type="ECO:0000255" key="1">
    <source>
        <dbReference type="PROSITE-ProRule" id="PRU00159"/>
    </source>
</evidence>
<evidence type="ECO:0000255" key="2">
    <source>
        <dbReference type="PROSITE-ProRule" id="PRU00191"/>
    </source>
</evidence>
<evidence type="ECO:0000256" key="3">
    <source>
        <dbReference type="SAM" id="MobiDB-lite"/>
    </source>
</evidence>
<evidence type="ECO:0000269" key="4">
    <source>
    </source>
</evidence>
<evidence type="ECO:0000269" key="5">
    <source>
    </source>
</evidence>
<evidence type="ECO:0000305" key="6"/>
<evidence type="ECO:0000312" key="7">
    <source>
        <dbReference type="Proteomes" id="UP000001940"/>
    </source>
</evidence>
<evidence type="ECO:0000312" key="8">
    <source>
        <dbReference type="WormBase" id="F53G12.6"/>
    </source>
</evidence>
<name>SPE8_CAEEL</name>
<gene>
    <name evidence="8" type="primary">spe-8</name>
    <name evidence="8" type="ORF">F53G12.6</name>
</gene>
<protein>
    <recommendedName>
        <fullName evidence="6">Spermatocyte protein spe-8</fullName>
        <ecNumber>2.7.10.2</ecNumber>
    </recommendedName>
    <alternativeName>
        <fullName evidence="8">Defective spermatogenesis protein spe-8</fullName>
    </alternativeName>
</protein>
<accession>O01798</accession>
<organism evidence="7">
    <name type="scientific">Caenorhabditis elegans</name>
    <dbReference type="NCBI Taxonomy" id="6239"/>
    <lineage>
        <taxon>Eukaryota</taxon>
        <taxon>Metazoa</taxon>
        <taxon>Ecdysozoa</taxon>
        <taxon>Nematoda</taxon>
        <taxon>Chromadorea</taxon>
        <taxon>Rhabditida</taxon>
        <taxon>Rhabditina</taxon>
        <taxon>Rhabditomorpha</taxon>
        <taxon>Rhabditoidea</taxon>
        <taxon>Rhabditidae</taxon>
        <taxon>Peloderinae</taxon>
        <taxon>Caenorhabditis</taxon>
    </lineage>
</organism>
<reference evidence="6" key="1">
    <citation type="journal article" date="2014" name="BMC Genet.">
        <title>SPE-8, a protein-tyrosine kinase, localizes to the spermatid cell membrane through interaction with other members of the SPE-8 group spermatid activation signaling pathway in C. elegans.</title>
        <authorList>
            <person name="Muhlrad P.J."/>
            <person name="Clark J.N."/>
            <person name="Nasri U."/>
            <person name="Sullivan N.G."/>
            <person name="LaMunyon C.W."/>
        </authorList>
    </citation>
    <scope>NUCLEOTIDE SEQUENCE [GENOMIC DNA]</scope>
    <scope>FUNCTION</scope>
    <scope>SUBCELLULAR LOCATION</scope>
    <scope>TISSUE SPECIFICITY</scope>
</reference>
<reference evidence="7" key="2">
    <citation type="journal article" date="1998" name="Science">
        <title>Genome sequence of the nematode C. elegans: a platform for investigating biology.</title>
        <authorList>
            <consortium name="The C. elegans sequencing consortium"/>
        </authorList>
    </citation>
    <scope>NUCLEOTIDE SEQUENCE [LARGE SCALE GENOMIC DNA]</scope>
    <source>
        <strain evidence="7">Bristol N2</strain>
    </source>
</reference>
<reference evidence="6" key="3">
    <citation type="journal article" date="1988" name="Genetics">
        <title>Developmental genetics of chromosome I spermatogenesis-defective mutants in the nematode Caenorhabditis elegans.</title>
        <authorList>
            <person name="L'Hernault S.W."/>
            <person name="Shakes D.C."/>
            <person name="Ward S."/>
        </authorList>
    </citation>
    <scope>FUNCTION</scope>
    <scope>MUTAGENESIS OF SER-150; GLY-229; VAL-231; GLY-405 AND ARG-465</scope>
</reference>
<proteinExistence type="evidence at protein level"/>
<keyword id="KW-0067">ATP-binding</keyword>
<keyword id="KW-1003">Cell membrane</keyword>
<keyword id="KW-0963">Cytoplasm</keyword>
<keyword id="KW-0221">Differentiation</keyword>
<keyword id="KW-0418">Kinase</keyword>
<keyword id="KW-0472">Membrane</keyword>
<keyword id="KW-0547">Nucleotide-binding</keyword>
<keyword id="KW-1185">Reference proteome</keyword>
<keyword id="KW-0727">SH2 domain</keyword>
<keyword id="KW-0744">Spermatogenesis</keyword>
<keyword id="KW-0808">Transferase</keyword>
<keyword id="KW-0829">Tyrosine-protein kinase</keyword>
<feature type="chain" id="PRO_0000433988" description="Spermatocyte protein spe-8" evidence="6">
    <location>
        <begin position="1"/>
        <end position="512"/>
    </location>
</feature>
<feature type="domain" description="SH2" evidence="2">
    <location>
        <begin position="114"/>
        <end position="205"/>
    </location>
</feature>
<feature type="domain" description="Protein kinase" evidence="1">
    <location>
        <begin position="217"/>
        <end position="485"/>
    </location>
</feature>
<feature type="region of interest" description="Disordered" evidence="3">
    <location>
        <begin position="1"/>
        <end position="85"/>
    </location>
</feature>
<feature type="compositionally biased region" description="Basic and acidic residues" evidence="3">
    <location>
        <begin position="15"/>
        <end position="41"/>
    </location>
</feature>
<feature type="compositionally biased region" description="Pro residues" evidence="3">
    <location>
        <begin position="68"/>
        <end position="78"/>
    </location>
</feature>
<feature type="active site" description="Proton acceptor" evidence="1">
    <location>
        <position position="344"/>
    </location>
</feature>
<feature type="binding site" evidence="1">
    <location>
        <begin position="223"/>
        <end position="231"/>
    </location>
    <ligand>
        <name>ATP</name>
        <dbReference type="ChEBI" id="CHEBI:30616"/>
    </ligand>
</feature>
<feature type="binding site" evidence="1">
    <location>
        <position position="250"/>
    </location>
    <ligand>
        <name>ATP</name>
        <dbReference type="ChEBI" id="CHEBI:30616"/>
    </ligand>
</feature>
<feature type="mutagenesis site" description="In hc134ts; temperature-sensitive self-sterility in hermaphrodites but normal male fertility." evidence="5">
    <original>S</original>
    <variation>N</variation>
    <location>
        <position position="150"/>
    </location>
</feature>
<feature type="mutagenesis site" description="In hc79; self-sterility in hermaphrodites but normal male fertility." evidence="5">
    <original>G</original>
    <variation>R</variation>
    <location>
        <position position="229"/>
    </location>
</feature>
<feature type="mutagenesis site" description="In hc53; self-sterility in hermaphrodites but normal male fertility." evidence="5">
    <original>V</original>
    <variation>M</variation>
    <location>
        <position position="231"/>
    </location>
</feature>
<feature type="mutagenesis site" description="In hc108; self-sterility in hermaphrodites but normal male fertility." evidence="5">
    <original>G</original>
    <variation>D</variation>
    <location>
        <position position="405"/>
    </location>
</feature>
<feature type="mutagenesis site" description="In hc40; self-sterility in hermaphrodites but normal male fertility." evidence="5">
    <original>R</original>
    <variation>H</variation>
    <location>
        <position position="465"/>
    </location>
</feature>
<dbReference type="EC" id="2.7.10.2"/>
<dbReference type="EMBL" id="BX284601">
    <property type="protein sequence ID" value="CCD71705.1"/>
    <property type="molecule type" value="Genomic_DNA"/>
</dbReference>
<dbReference type="PIR" id="T29030">
    <property type="entry name" value="T29030"/>
</dbReference>
<dbReference type="RefSeq" id="NP_490680.1">
    <property type="nucleotide sequence ID" value="NM_058279.2"/>
</dbReference>
<dbReference type="SMR" id="O01798"/>
<dbReference type="FunCoup" id="O01798">
    <property type="interactions" value="14"/>
</dbReference>
<dbReference type="STRING" id="6239.F53G12.6.1"/>
<dbReference type="PaxDb" id="6239-F53G12.6"/>
<dbReference type="EnsemblMetazoa" id="F53G12.6.1">
    <property type="protein sequence ID" value="F53G12.6.1"/>
    <property type="gene ID" value="WBGene00004962"/>
</dbReference>
<dbReference type="GeneID" id="171606"/>
<dbReference type="KEGG" id="cel:CELE_F53G12.6"/>
<dbReference type="UCSC" id="F53G12.6">
    <property type="organism name" value="c. elegans"/>
</dbReference>
<dbReference type="AGR" id="WB:WBGene00004962"/>
<dbReference type="CTD" id="171606"/>
<dbReference type="WormBase" id="F53G12.6">
    <property type="protein sequence ID" value="CE29331"/>
    <property type="gene ID" value="WBGene00004962"/>
    <property type="gene designation" value="spe-8"/>
</dbReference>
<dbReference type="eggNOG" id="KOG0194">
    <property type="taxonomic scope" value="Eukaryota"/>
</dbReference>
<dbReference type="HOGENOM" id="CLU_000288_7_2_1"/>
<dbReference type="InParanoid" id="O01798"/>
<dbReference type="OMA" id="CLPVKYM"/>
<dbReference type="OrthoDB" id="546826at2759"/>
<dbReference type="PhylomeDB" id="O01798"/>
<dbReference type="PRO" id="PR:O01798"/>
<dbReference type="Proteomes" id="UP000001940">
    <property type="component" value="Chromosome I"/>
</dbReference>
<dbReference type="Bgee" id="WBGene00004962">
    <property type="expression patterns" value="Expressed in material anatomical entity and 2 other cell types or tissues"/>
</dbReference>
<dbReference type="GO" id="GO:0005737">
    <property type="term" value="C:cytoplasm"/>
    <property type="evidence" value="ECO:0007669"/>
    <property type="project" value="UniProtKB-SubCell"/>
</dbReference>
<dbReference type="GO" id="GO:0005886">
    <property type="term" value="C:plasma membrane"/>
    <property type="evidence" value="ECO:0000314"/>
    <property type="project" value="WormBase"/>
</dbReference>
<dbReference type="GO" id="GO:0005524">
    <property type="term" value="F:ATP binding"/>
    <property type="evidence" value="ECO:0007669"/>
    <property type="project" value="UniProtKB-KW"/>
</dbReference>
<dbReference type="GO" id="GO:0004715">
    <property type="term" value="F:non-membrane spanning protein tyrosine kinase activity"/>
    <property type="evidence" value="ECO:0000318"/>
    <property type="project" value="GO_Central"/>
</dbReference>
<dbReference type="GO" id="GO:0005102">
    <property type="term" value="F:signaling receptor binding"/>
    <property type="evidence" value="ECO:0000318"/>
    <property type="project" value="GO_Central"/>
</dbReference>
<dbReference type="GO" id="GO:0030154">
    <property type="term" value="P:cell differentiation"/>
    <property type="evidence" value="ECO:0000318"/>
    <property type="project" value="GO_Central"/>
</dbReference>
<dbReference type="GO" id="GO:0007169">
    <property type="term" value="P:cell surface receptor protein tyrosine kinase signaling pathway"/>
    <property type="evidence" value="ECO:0000318"/>
    <property type="project" value="GO_Central"/>
</dbReference>
<dbReference type="GO" id="GO:0007286">
    <property type="term" value="P:spermatid development"/>
    <property type="evidence" value="ECO:0000315"/>
    <property type="project" value="WormBase"/>
</dbReference>
<dbReference type="CDD" id="cd00192">
    <property type="entry name" value="PTKc"/>
    <property type="match status" value="1"/>
</dbReference>
<dbReference type="CDD" id="cd10361">
    <property type="entry name" value="SH2_Fps_family"/>
    <property type="match status" value="1"/>
</dbReference>
<dbReference type="FunFam" id="3.30.200.20:FF:000194">
    <property type="entry name" value="protein-tyrosine kinase 2-beta isoform X1"/>
    <property type="match status" value="1"/>
</dbReference>
<dbReference type="FunFam" id="1.10.510.10:FF:001388">
    <property type="entry name" value="Tyrosine-protein kinase"/>
    <property type="match status" value="1"/>
</dbReference>
<dbReference type="Gene3D" id="3.30.200.20">
    <property type="entry name" value="Phosphorylase Kinase, domain 1"/>
    <property type="match status" value="1"/>
</dbReference>
<dbReference type="Gene3D" id="3.30.505.10">
    <property type="entry name" value="SH2 domain"/>
    <property type="match status" value="1"/>
</dbReference>
<dbReference type="Gene3D" id="1.10.510.10">
    <property type="entry name" value="Transferase(Phosphotransferase) domain 1"/>
    <property type="match status" value="1"/>
</dbReference>
<dbReference type="InterPro" id="IPR035849">
    <property type="entry name" value="Fes/Fps/Fer_SH2"/>
</dbReference>
<dbReference type="InterPro" id="IPR011009">
    <property type="entry name" value="Kinase-like_dom_sf"/>
</dbReference>
<dbReference type="InterPro" id="IPR050198">
    <property type="entry name" value="Non-receptor_tyrosine_kinases"/>
</dbReference>
<dbReference type="InterPro" id="IPR000719">
    <property type="entry name" value="Prot_kinase_dom"/>
</dbReference>
<dbReference type="InterPro" id="IPR017441">
    <property type="entry name" value="Protein_kinase_ATP_BS"/>
</dbReference>
<dbReference type="InterPro" id="IPR001245">
    <property type="entry name" value="Ser-Thr/Tyr_kinase_cat_dom"/>
</dbReference>
<dbReference type="InterPro" id="IPR000980">
    <property type="entry name" value="SH2"/>
</dbReference>
<dbReference type="InterPro" id="IPR036860">
    <property type="entry name" value="SH2_dom_sf"/>
</dbReference>
<dbReference type="InterPro" id="IPR008266">
    <property type="entry name" value="Tyr_kinase_AS"/>
</dbReference>
<dbReference type="InterPro" id="IPR020635">
    <property type="entry name" value="Tyr_kinase_cat_dom"/>
</dbReference>
<dbReference type="PANTHER" id="PTHR24418">
    <property type="entry name" value="TYROSINE-PROTEIN KINASE"/>
    <property type="match status" value="1"/>
</dbReference>
<dbReference type="Pfam" id="PF07714">
    <property type="entry name" value="PK_Tyr_Ser-Thr"/>
    <property type="match status" value="1"/>
</dbReference>
<dbReference type="Pfam" id="PF00017">
    <property type="entry name" value="SH2"/>
    <property type="match status" value="1"/>
</dbReference>
<dbReference type="PRINTS" id="PR00109">
    <property type="entry name" value="TYRKINASE"/>
</dbReference>
<dbReference type="SMART" id="SM00252">
    <property type="entry name" value="SH2"/>
    <property type="match status" value="1"/>
</dbReference>
<dbReference type="SMART" id="SM00219">
    <property type="entry name" value="TyrKc"/>
    <property type="match status" value="1"/>
</dbReference>
<dbReference type="SUPFAM" id="SSF56112">
    <property type="entry name" value="Protein kinase-like (PK-like)"/>
    <property type="match status" value="1"/>
</dbReference>
<dbReference type="SUPFAM" id="SSF55550">
    <property type="entry name" value="SH2 domain"/>
    <property type="match status" value="1"/>
</dbReference>
<dbReference type="PROSITE" id="PS00107">
    <property type="entry name" value="PROTEIN_KINASE_ATP"/>
    <property type="match status" value="1"/>
</dbReference>
<dbReference type="PROSITE" id="PS50011">
    <property type="entry name" value="PROTEIN_KINASE_DOM"/>
    <property type="match status" value="1"/>
</dbReference>
<dbReference type="PROSITE" id="PS00109">
    <property type="entry name" value="PROTEIN_KINASE_TYR"/>
    <property type="match status" value="1"/>
</dbReference>
<dbReference type="PROSITE" id="PS50001">
    <property type="entry name" value="SH2"/>
    <property type="match status" value="1"/>
</dbReference>